<accession>A6VXY8</accession>
<organism>
    <name type="scientific">Marinomonas sp. (strain MWYL1)</name>
    <dbReference type="NCBI Taxonomy" id="400668"/>
    <lineage>
        <taxon>Bacteria</taxon>
        <taxon>Pseudomonadati</taxon>
        <taxon>Pseudomonadota</taxon>
        <taxon>Gammaproteobacteria</taxon>
        <taxon>Oceanospirillales</taxon>
        <taxon>Oceanospirillaceae</taxon>
        <taxon>Marinomonas</taxon>
    </lineage>
</organism>
<feature type="chain" id="PRO_0000336201" description="UPF0102 protein Mmwyl1_2395">
    <location>
        <begin position="1"/>
        <end position="127"/>
    </location>
</feature>
<sequence>MRPVTSFLNRKKAPKNNGDKAEQAAEAFLRKQGLRFVERNFFCRIGEIDLIFLDQNTYVFVEVRFRANNTHGNAAESLGQSKLKKVRNSAALWLQKNNKVNNSSRFDAILFDEKIDSQHLTWLKAVF</sequence>
<comment type="similarity">
    <text evidence="1">Belongs to the UPF0102 family.</text>
</comment>
<evidence type="ECO:0000255" key="1">
    <source>
        <dbReference type="HAMAP-Rule" id="MF_00048"/>
    </source>
</evidence>
<dbReference type="EMBL" id="CP000749">
    <property type="protein sequence ID" value="ABR71317.1"/>
    <property type="molecule type" value="Genomic_DNA"/>
</dbReference>
<dbReference type="SMR" id="A6VXY8"/>
<dbReference type="STRING" id="400668.Mmwyl1_2395"/>
<dbReference type="KEGG" id="mmw:Mmwyl1_2395"/>
<dbReference type="eggNOG" id="COG0792">
    <property type="taxonomic scope" value="Bacteria"/>
</dbReference>
<dbReference type="HOGENOM" id="CLU_115353_1_1_6"/>
<dbReference type="OrthoDB" id="9794876at2"/>
<dbReference type="GO" id="GO:0003676">
    <property type="term" value="F:nucleic acid binding"/>
    <property type="evidence" value="ECO:0007669"/>
    <property type="project" value="InterPro"/>
</dbReference>
<dbReference type="CDD" id="cd20736">
    <property type="entry name" value="PoNe_Nuclease"/>
    <property type="match status" value="1"/>
</dbReference>
<dbReference type="Gene3D" id="3.40.1350.10">
    <property type="match status" value="1"/>
</dbReference>
<dbReference type="HAMAP" id="MF_00048">
    <property type="entry name" value="UPF0102"/>
    <property type="match status" value="1"/>
</dbReference>
<dbReference type="InterPro" id="IPR011335">
    <property type="entry name" value="Restrct_endonuc-II-like"/>
</dbReference>
<dbReference type="InterPro" id="IPR011856">
    <property type="entry name" value="tRNA_endonuc-like_dom_sf"/>
</dbReference>
<dbReference type="InterPro" id="IPR003509">
    <property type="entry name" value="UPF0102_YraN-like"/>
</dbReference>
<dbReference type="NCBIfam" id="NF009150">
    <property type="entry name" value="PRK12497.1-3"/>
    <property type="match status" value="1"/>
</dbReference>
<dbReference type="NCBIfam" id="TIGR00252">
    <property type="entry name" value="YraN family protein"/>
    <property type="match status" value="1"/>
</dbReference>
<dbReference type="PANTHER" id="PTHR34039">
    <property type="entry name" value="UPF0102 PROTEIN YRAN"/>
    <property type="match status" value="1"/>
</dbReference>
<dbReference type="PANTHER" id="PTHR34039:SF1">
    <property type="entry name" value="UPF0102 PROTEIN YRAN"/>
    <property type="match status" value="1"/>
</dbReference>
<dbReference type="Pfam" id="PF02021">
    <property type="entry name" value="UPF0102"/>
    <property type="match status" value="1"/>
</dbReference>
<dbReference type="SUPFAM" id="SSF52980">
    <property type="entry name" value="Restriction endonuclease-like"/>
    <property type="match status" value="1"/>
</dbReference>
<gene>
    <name type="ordered locus">Mmwyl1_2395</name>
</gene>
<proteinExistence type="inferred from homology"/>
<protein>
    <recommendedName>
        <fullName evidence="1">UPF0102 protein Mmwyl1_2395</fullName>
    </recommendedName>
</protein>
<reference key="1">
    <citation type="submission" date="2007-06" db="EMBL/GenBank/DDBJ databases">
        <title>Complete sequence of Marinomonas sp. MWYL1.</title>
        <authorList>
            <consortium name="US DOE Joint Genome Institute"/>
            <person name="Copeland A."/>
            <person name="Lucas S."/>
            <person name="Lapidus A."/>
            <person name="Barry K."/>
            <person name="Glavina del Rio T."/>
            <person name="Dalin E."/>
            <person name="Tice H."/>
            <person name="Pitluck S."/>
            <person name="Kiss H."/>
            <person name="Brettin T."/>
            <person name="Bruce D."/>
            <person name="Detter J.C."/>
            <person name="Han C."/>
            <person name="Schmutz J."/>
            <person name="Larimer F."/>
            <person name="Land M."/>
            <person name="Hauser L."/>
            <person name="Kyrpides N."/>
            <person name="Kim E."/>
            <person name="Johnston A.W.B."/>
            <person name="Todd J.D."/>
            <person name="Rogers R."/>
            <person name="Wexler M."/>
            <person name="Bond P.L."/>
            <person name="Li Y."/>
            <person name="Richardson P."/>
        </authorList>
    </citation>
    <scope>NUCLEOTIDE SEQUENCE [LARGE SCALE GENOMIC DNA]</scope>
    <source>
        <strain>MWYL1</strain>
    </source>
</reference>
<name>Y2395_MARMS</name>